<proteinExistence type="evidence at protein level"/>
<name>RN2C_LITSE</name>
<accession>P85053</accession>
<protein>
    <recommendedName>
        <fullName>Ranatuerin-2SEc</fullName>
    </recommendedName>
</protein>
<reference evidence="4" key="1">
    <citation type="journal article" date="2006" name="Peptides">
        <title>Histamine-releasing and antimicrobial peptides from the skin secretions of the dusky gopher frog, Rana sevosa.</title>
        <authorList>
            <person name="Graham C."/>
            <person name="Richter S.C."/>
            <person name="McClean S."/>
            <person name="O'Kane E."/>
            <person name="Flatt P.R."/>
            <person name="Shaw C."/>
        </authorList>
    </citation>
    <scope>PROTEIN SEQUENCE</scope>
    <scope>FUNCTION</scope>
    <scope>SUBCELLULAR LOCATION</scope>
    <scope>TISSUE SPECIFICITY</scope>
    <scope>MASS SPECTROMETRY</scope>
    <source>
        <tissue evidence="3">Skin secretion</tissue>
    </source>
</reference>
<evidence type="ECO:0000250" key="1">
    <source>
        <dbReference type="UniProtKB" id="P40840"/>
    </source>
</evidence>
<evidence type="ECO:0000255" key="2"/>
<evidence type="ECO:0000269" key="3">
    <source>
    </source>
</evidence>
<evidence type="ECO:0000305" key="4"/>
<sequence>GIMDTIKDTAKTVAVGLLNKLKCKITGC</sequence>
<dbReference type="SMR" id="P85053"/>
<dbReference type="GO" id="GO:0005576">
    <property type="term" value="C:extracellular region"/>
    <property type="evidence" value="ECO:0000314"/>
    <property type="project" value="UniProtKB"/>
</dbReference>
<dbReference type="GO" id="GO:0050829">
    <property type="term" value="P:defense response to Gram-negative bacterium"/>
    <property type="evidence" value="ECO:0000314"/>
    <property type="project" value="UniProtKB"/>
</dbReference>
<dbReference type="GO" id="GO:0050830">
    <property type="term" value="P:defense response to Gram-positive bacterium"/>
    <property type="evidence" value="ECO:0000314"/>
    <property type="project" value="UniProtKB"/>
</dbReference>
<dbReference type="GO" id="GO:0002553">
    <property type="term" value="P:histamine secretion by mast cell"/>
    <property type="evidence" value="ECO:0000314"/>
    <property type="project" value="UniProtKB"/>
</dbReference>
<dbReference type="GO" id="GO:0043306">
    <property type="term" value="P:positive regulation of mast cell degranulation"/>
    <property type="evidence" value="ECO:0000314"/>
    <property type="project" value="UniProtKB"/>
</dbReference>
<dbReference type="InterPro" id="IPR012521">
    <property type="entry name" value="Antimicrobial_frog_2"/>
</dbReference>
<dbReference type="Pfam" id="PF08023">
    <property type="entry name" value="Antimicrobial_2"/>
    <property type="match status" value="1"/>
</dbReference>
<comment type="function">
    <text evidence="3">Mast cell degranulating peptide. Causes histamine release from rat peritoneal mast cells in vitro. Has antibacterial activity against the Gram-negative bacterium E.coli K12 and Gram-positive bacterium M.luteus NCT C2665.</text>
</comment>
<comment type="subcellular location">
    <subcellularLocation>
        <location evidence="3">Secreted</location>
    </subcellularLocation>
</comment>
<comment type="tissue specificity">
    <text evidence="3">Expressed by the skin glands.</text>
</comment>
<comment type="mass spectrometry"/>
<comment type="mass spectrometry"/>
<comment type="similarity">
    <text evidence="2">Belongs to the frog skin active peptide (FSAP) family. Ranatuerin subfamily.</text>
</comment>
<feature type="peptide" id="PRO_0000271261" description="Ranatuerin-2SEc">
    <location>
        <begin position="1"/>
        <end position="28"/>
    </location>
</feature>
<feature type="disulfide bond" evidence="1">
    <location>
        <begin position="23"/>
        <end position="28"/>
    </location>
</feature>
<organism>
    <name type="scientific">Lithobates sevosus</name>
    <name type="common">Dusky gopher frog</name>
    <name type="synonym">Rana sevosa</name>
    <dbReference type="NCBI Taxonomy" id="299683"/>
    <lineage>
        <taxon>Eukaryota</taxon>
        <taxon>Metazoa</taxon>
        <taxon>Chordata</taxon>
        <taxon>Craniata</taxon>
        <taxon>Vertebrata</taxon>
        <taxon>Euteleostomi</taxon>
        <taxon>Amphibia</taxon>
        <taxon>Batrachia</taxon>
        <taxon>Anura</taxon>
        <taxon>Neobatrachia</taxon>
        <taxon>Ranoidea</taxon>
        <taxon>Ranidae</taxon>
        <taxon>Lithobates</taxon>
    </lineage>
</organism>
<keyword id="KW-0878">Amphibian defense peptide</keyword>
<keyword id="KW-0044">Antibiotic</keyword>
<keyword id="KW-0929">Antimicrobial</keyword>
<keyword id="KW-0903">Direct protein sequencing</keyword>
<keyword id="KW-1015">Disulfide bond</keyword>
<keyword id="KW-0395">Inflammatory response</keyword>
<keyword id="KW-0467">Mast cell degranulation</keyword>
<keyword id="KW-0964">Secreted</keyword>